<sequence length="533" mass="62258">MDSDEGYNYEFDDEEEEEEEEEECSVDSGEEEAVDDSLELGEVELLDPAVAGGEPDDCADTGGGGPGPGQEDEDYRFEVLTTEQILQHMVECIRDVNEVIQNPATITRILLSHFNWDKEKLMERYFDGNLDKLFSECHVINPSKKPKTRPMSTRSSSQDLPCQICYLNYPNSYFTGLECGHKFCMQCWGDYLTTKIIEEGMGQTISCPAHNCDILVDDNTVMRLITDSKVKLKYQHLITNSFVECNRLLKWCPAPDCHHVVKVQYPDAKPVRCKCGRQFCFNCGENWHDPVKCKWLRKWIKKCDDDSETSNWIAANTKECPKCHVTIEKDGGCNHMVCRNQNCKAEFCWVCLGPWEPHGSAWYNCNRYNEDDAKAARDAQERSRAALQRYLFYCNRYMNHMQSLRFEHKLYAQVKQKMEEMQQHNMSWIEVQFLKKAVDVLCQCRSTLMFTYVFAFYLKKNNQSIIFENNQADLENATEVLSGYLERDISQDSLQDIKQKVQDKYRYCESRRRVLLQHVHEGYEKDLWEYIED</sequence>
<evidence type="ECO:0000250" key="1">
    <source>
        <dbReference type="UniProtKB" id="Q9Y4X5"/>
    </source>
</evidence>
<evidence type="ECO:0000255" key="2"/>
<evidence type="ECO:0000255" key="3">
    <source>
        <dbReference type="PROSITE-ProRule" id="PRU01221"/>
    </source>
</evidence>
<evidence type="ECO:0000256" key="4">
    <source>
        <dbReference type="SAM" id="MobiDB-lite"/>
    </source>
</evidence>
<evidence type="ECO:0000305" key="5"/>
<organism>
    <name type="scientific">Danio rerio</name>
    <name type="common">Zebrafish</name>
    <name type="synonym">Brachydanio rerio</name>
    <dbReference type="NCBI Taxonomy" id="7955"/>
    <lineage>
        <taxon>Eukaryota</taxon>
        <taxon>Metazoa</taxon>
        <taxon>Chordata</taxon>
        <taxon>Craniata</taxon>
        <taxon>Vertebrata</taxon>
        <taxon>Euteleostomi</taxon>
        <taxon>Actinopterygii</taxon>
        <taxon>Neopterygii</taxon>
        <taxon>Teleostei</taxon>
        <taxon>Ostariophysi</taxon>
        <taxon>Cypriniformes</taxon>
        <taxon>Danionidae</taxon>
        <taxon>Danioninae</taxon>
        <taxon>Danio</taxon>
    </lineage>
</organism>
<gene>
    <name type="primary">arih1l</name>
    <name type="ORF">zgc:85905</name>
</gene>
<protein>
    <recommendedName>
        <fullName>E3 ubiquitin-protein ligase arih1l</fullName>
        <ecNumber evidence="1">2.3.2.31</ecNumber>
    </recommendedName>
</protein>
<reference key="1">
    <citation type="submission" date="2004-03" db="EMBL/GenBank/DDBJ databases">
        <authorList>
            <consortium name="NIH - Zebrafish Gene Collection (ZGC) project"/>
        </authorList>
    </citation>
    <scope>NUCLEOTIDE SEQUENCE [LARGE SCALE MRNA]</scope>
    <source>
        <tissue>Embryo</tissue>
    </source>
</reference>
<keyword id="KW-0175">Coiled coil</keyword>
<keyword id="KW-0963">Cytoplasm</keyword>
<keyword id="KW-0479">Metal-binding</keyword>
<keyword id="KW-1185">Reference proteome</keyword>
<keyword id="KW-0677">Repeat</keyword>
<keyword id="KW-0808">Transferase</keyword>
<keyword id="KW-0833">Ubl conjugation pathway</keyword>
<keyword id="KW-0862">Zinc</keyword>
<keyword id="KW-0863">Zinc-finger</keyword>
<dbReference type="EC" id="2.3.2.31" evidence="1"/>
<dbReference type="EMBL" id="BC067684">
    <property type="protein sequence ID" value="AAH67684.1"/>
    <property type="molecule type" value="mRNA"/>
</dbReference>
<dbReference type="RefSeq" id="NP_998088.1">
    <property type="nucleotide sequence ID" value="NM_212923.1"/>
</dbReference>
<dbReference type="BMRB" id="Q6NW85"/>
<dbReference type="SMR" id="Q6NW85"/>
<dbReference type="FunCoup" id="Q6NW85">
    <property type="interactions" value="2084"/>
</dbReference>
<dbReference type="STRING" id="7955.ENSDARP00000053534"/>
<dbReference type="PaxDb" id="7955-ENSDARP00000053534"/>
<dbReference type="Ensembl" id="ENSDART00000053535">
    <property type="protein sequence ID" value="ENSDARP00000053534"/>
    <property type="gene ID" value="ENSDARG00000036870"/>
</dbReference>
<dbReference type="Ensembl" id="ENSDART00000185890">
    <property type="protein sequence ID" value="ENSDARP00000151354"/>
    <property type="gene ID" value="ENSDARG00000112965"/>
</dbReference>
<dbReference type="GeneID" id="405859"/>
<dbReference type="KEGG" id="dre:405859"/>
<dbReference type="AGR" id="ZFIN:ZDB-GENE-040426-2395"/>
<dbReference type="CTD" id="405859"/>
<dbReference type="ZFIN" id="ZDB-GENE-040426-2395">
    <property type="gene designation" value="arih1l"/>
</dbReference>
<dbReference type="eggNOG" id="KOG1815">
    <property type="taxonomic scope" value="Eukaryota"/>
</dbReference>
<dbReference type="HOGENOM" id="CLU_009823_4_2_1"/>
<dbReference type="InParanoid" id="Q6NW85"/>
<dbReference type="OMA" id="YIIESIM"/>
<dbReference type="OrthoDB" id="10009520at2759"/>
<dbReference type="PhylomeDB" id="Q6NW85"/>
<dbReference type="TreeFam" id="TF300805"/>
<dbReference type="UniPathway" id="UPA00143"/>
<dbReference type="PRO" id="PR:Q6NW85"/>
<dbReference type="Proteomes" id="UP000000437">
    <property type="component" value="Alternate scaffold 7"/>
</dbReference>
<dbReference type="Proteomes" id="UP000000437">
    <property type="component" value="Chromosome 7"/>
</dbReference>
<dbReference type="Bgee" id="ENSDARG00000036870">
    <property type="expression patterns" value="Expressed in swim bladder and 25 other cell types or tissues"/>
</dbReference>
<dbReference type="GO" id="GO:0005737">
    <property type="term" value="C:cytoplasm"/>
    <property type="evidence" value="ECO:0000250"/>
    <property type="project" value="UniProtKB"/>
</dbReference>
<dbReference type="GO" id="GO:0005634">
    <property type="term" value="C:nucleus"/>
    <property type="evidence" value="ECO:0000318"/>
    <property type="project" value="GO_Central"/>
</dbReference>
<dbReference type="GO" id="GO:0000151">
    <property type="term" value="C:ubiquitin ligase complex"/>
    <property type="evidence" value="ECO:0000318"/>
    <property type="project" value="GO_Central"/>
</dbReference>
<dbReference type="GO" id="GO:0031624">
    <property type="term" value="F:ubiquitin conjugating enzyme binding"/>
    <property type="evidence" value="ECO:0000318"/>
    <property type="project" value="GO_Central"/>
</dbReference>
<dbReference type="GO" id="GO:0061630">
    <property type="term" value="F:ubiquitin protein ligase activity"/>
    <property type="evidence" value="ECO:0000318"/>
    <property type="project" value="GO_Central"/>
</dbReference>
<dbReference type="GO" id="GO:0004842">
    <property type="term" value="F:ubiquitin-protein transferase activity"/>
    <property type="evidence" value="ECO:0000250"/>
    <property type="project" value="UniProtKB"/>
</dbReference>
<dbReference type="GO" id="GO:0008270">
    <property type="term" value="F:zinc ion binding"/>
    <property type="evidence" value="ECO:0000250"/>
    <property type="project" value="UniProtKB"/>
</dbReference>
<dbReference type="GO" id="GO:0016567">
    <property type="term" value="P:protein ubiquitination"/>
    <property type="evidence" value="ECO:0000250"/>
    <property type="project" value="UniProtKB"/>
</dbReference>
<dbReference type="GO" id="GO:0006511">
    <property type="term" value="P:ubiquitin-dependent protein catabolic process"/>
    <property type="evidence" value="ECO:0000318"/>
    <property type="project" value="GO_Central"/>
</dbReference>
<dbReference type="CDD" id="cd20343">
    <property type="entry name" value="BRcat_RBR_HHARI-like"/>
    <property type="match status" value="1"/>
</dbReference>
<dbReference type="CDD" id="cd20356">
    <property type="entry name" value="Rcat_RBR_HHARI-like"/>
    <property type="match status" value="1"/>
</dbReference>
<dbReference type="CDD" id="cd16626">
    <property type="entry name" value="RING-HC_RBR_HHARI"/>
    <property type="match status" value="1"/>
</dbReference>
<dbReference type="FunFam" id="1.20.120.1750:FF:000002">
    <property type="entry name" value="RBR-type E3 ubiquitin transferase"/>
    <property type="match status" value="1"/>
</dbReference>
<dbReference type="FunFam" id="3.30.40.10:FF:000019">
    <property type="entry name" value="RBR-type E3 ubiquitin transferase"/>
    <property type="match status" value="1"/>
</dbReference>
<dbReference type="Gene3D" id="1.20.120.1750">
    <property type="match status" value="1"/>
</dbReference>
<dbReference type="Gene3D" id="3.30.40.10">
    <property type="entry name" value="Zinc/RING finger domain, C3HC4 (zinc finger)"/>
    <property type="match status" value="1"/>
</dbReference>
<dbReference type="InterPro" id="IPR045840">
    <property type="entry name" value="Ariadne"/>
</dbReference>
<dbReference type="InterPro" id="IPR048962">
    <property type="entry name" value="ARIH1-like_UBL"/>
</dbReference>
<dbReference type="InterPro" id="IPR031127">
    <property type="entry name" value="E3_UB_ligase_RBR"/>
</dbReference>
<dbReference type="InterPro" id="IPR002867">
    <property type="entry name" value="IBR_dom"/>
</dbReference>
<dbReference type="InterPro" id="IPR044066">
    <property type="entry name" value="TRIAD_supradom"/>
</dbReference>
<dbReference type="InterPro" id="IPR001841">
    <property type="entry name" value="Znf_RING"/>
</dbReference>
<dbReference type="InterPro" id="IPR013083">
    <property type="entry name" value="Znf_RING/FYVE/PHD"/>
</dbReference>
<dbReference type="PANTHER" id="PTHR11685">
    <property type="entry name" value="RBR FAMILY RING FINGER AND IBR DOMAIN-CONTAINING"/>
    <property type="match status" value="1"/>
</dbReference>
<dbReference type="Pfam" id="PF19422">
    <property type="entry name" value="Ariadne"/>
    <property type="match status" value="1"/>
</dbReference>
<dbReference type="Pfam" id="PF01485">
    <property type="entry name" value="IBR"/>
    <property type="match status" value="1"/>
</dbReference>
<dbReference type="Pfam" id="PF22191">
    <property type="entry name" value="IBR_1"/>
    <property type="match status" value="1"/>
</dbReference>
<dbReference type="Pfam" id="PF21235">
    <property type="entry name" value="UBA_ARI1"/>
    <property type="match status" value="1"/>
</dbReference>
<dbReference type="SMART" id="SM00647">
    <property type="entry name" value="IBR"/>
    <property type="match status" value="2"/>
</dbReference>
<dbReference type="SUPFAM" id="SSF57850">
    <property type="entry name" value="RING/U-box"/>
    <property type="match status" value="3"/>
</dbReference>
<dbReference type="PROSITE" id="PS51873">
    <property type="entry name" value="TRIAD"/>
    <property type="match status" value="1"/>
</dbReference>
<dbReference type="PROSITE" id="PS50089">
    <property type="entry name" value="ZF_RING_2"/>
    <property type="match status" value="1"/>
</dbReference>
<comment type="function">
    <text evidence="1">E3 ubiquitin-protein ligase, which catalyzes polyubiquitination of target proteins together with ubiquitin-conjugating enzyme E2 ube2l3.</text>
</comment>
<comment type="catalytic activity">
    <reaction evidence="1">
        <text>[E2 ubiquitin-conjugating enzyme]-S-ubiquitinyl-L-cysteine + [acceptor protein]-L-lysine = [E2 ubiquitin-conjugating enzyme]-L-cysteine + [acceptor protein]-N(6)-ubiquitinyl-L-lysine.</text>
        <dbReference type="EC" id="2.3.2.31"/>
    </reaction>
</comment>
<comment type="pathway">
    <text>Protein modification; protein ubiquitination.</text>
</comment>
<comment type="subcellular location">
    <subcellularLocation>
        <location evidence="1">Cytoplasm</location>
    </subcellularLocation>
</comment>
<comment type="domain">
    <text evidence="1">Members of the RBR family are atypical E3 ligases. They interact with the E2 conjugating enzyme UBE2L3 and function like HECT-type E3 enzymes: they bind E2s via the first RING-type zinc finger, but require an obligate trans-thiolation step during the ubiquitin transfer, requiring a conserved active site Cys residue in the second RING-type zinc finger. The active site probably forms a thioester intermediate with ubiquitin taken from the active-site cysteine of the E2 before ultimately transferring it to a Lys residue on the substrate.</text>
</comment>
<comment type="similarity">
    <text evidence="5">Belongs to the RBR family. Ariadne subfamily.</text>
</comment>
<name>ARI1L_DANRE</name>
<feature type="chain" id="PRO_0000410896" description="E3 ubiquitin-protein ligase arih1l">
    <location>
        <begin position="1"/>
        <end position="533"/>
    </location>
</feature>
<feature type="zinc finger region" description="RING-type 1" evidence="3">
    <location>
        <begin position="162"/>
        <end position="212"/>
    </location>
</feature>
<feature type="zinc finger region" description="IBR-type" evidence="3">
    <location>
        <begin position="232"/>
        <end position="293"/>
    </location>
</feature>
<feature type="zinc finger region" description="RING-type 2; atypical" evidence="3">
    <location>
        <begin position="320"/>
        <end position="351"/>
    </location>
</feature>
<feature type="region of interest" description="Disordered" evidence="4">
    <location>
        <begin position="1"/>
        <end position="35"/>
    </location>
</feature>
<feature type="region of interest" description="Disordered" evidence="4">
    <location>
        <begin position="48"/>
        <end position="73"/>
    </location>
</feature>
<feature type="region of interest" description="TRIAD supradomain" evidence="3">
    <location>
        <begin position="158"/>
        <end position="369"/>
    </location>
</feature>
<feature type="coiled-coil region" evidence="2">
    <location>
        <begin position="409"/>
        <end position="425"/>
    </location>
</feature>
<feature type="active site" evidence="3">
    <location>
        <position position="333"/>
    </location>
</feature>
<feature type="binding site" evidence="3">
    <location>
        <position position="162"/>
    </location>
    <ligand>
        <name>Zn(2+)</name>
        <dbReference type="ChEBI" id="CHEBI:29105"/>
        <label>1</label>
    </ligand>
</feature>
<feature type="binding site" evidence="3">
    <location>
        <position position="165"/>
    </location>
    <ligand>
        <name>Zn(2+)</name>
        <dbReference type="ChEBI" id="CHEBI:29105"/>
        <label>1</label>
    </ligand>
</feature>
<feature type="binding site" evidence="3">
    <location>
        <position position="179"/>
    </location>
    <ligand>
        <name>Zn(2+)</name>
        <dbReference type="ChEBI" id="CHEBI:29105"/>
        <label>2</label>
    </ligand>
</feature>
<feature type="binding site" evidence="3">
    <location>
        <position position="181"/>
    </location>
    <ligand>
        <name>Zn(2+)</name>
        <dbReference type="ChEBI" id="CHEBI:29105"/>
        <label>2</label>
    </ligand>
</feature>
<feature type="binding site" evidence="3">
    <location>
        <position position="184"/>
    </location>
    <ligand>
        <name>Zn(2+)</name>
        <dbReference type="ChEBI" id="CHEBI:29105"/>
        <label>1</label>
    </ligand>
</feature>
<feature type="binding site" evidence="3">
    <location>
        <position position="187"/>
    </location>
    <ligand>
        <name>Zn(2+)</name>
        <dbReference type="ChEBI" id="CHEBI:29105"/>
        <label>1</label>
    </ligand>
</feature>
<feature type="binding site" evidence="3">
    <location>
        <position position="207"/>
    </location>
    <ligand>
        <name>Zn(2+)</name>
        <dbReference type="ChEBI" id="CHEBI:29105"/>
        <label>2</label>
    </ligand>
</feature>
<feature type="binding site" evidence="3">
    <location>
        <position position="212"/>
    </location>
    <ligand>
        <name>Zn(2+)</name>
        <dbReference type="ChEBI" id="CHEBI:29105"/>
        <label>2</label>
    </ligand>
</feature>
<feature type="binding site" evidence="3">
    <location>
        <position position="252"/>
    </location>
    <ligand>
        <name>Zn(2+)</name>
        <dbReference type="ChEBI" id="CHEBI:29105"/>
        <label>3</label>
    </ligand>
</feature>
<feature type="binding site" evidence="3">
    <location>
        <position position="257"/>
    </location>
    <ligand>
        <name>Zn(2+)</name>
        <dbReference type="ChEBI" id="CHEBI:29105"/>
        <label>3</label>
    </ligand>
</feature>
<feature type="binding site" evidence="3">
    <location>
        <position position="273"/>
    </location>
    <ligand>
        <name>Zn(2+)</name>
        <dbReference type="ChEBI" id="CHEBI:29105"/>
        <label>3</label>
    </ligand>
</feature>
<feature type="binding site" evidence="3">
    <location>
        <position position="275"/>
    </location>
    <ligand>
        <name>Zn(2+)</name>
        <dbReference type="ChEBI" id="CHEBI:29105"/>
        <label>3</label>
    </ligand>
</feature>
<feature type="binding site" evidence="3">
    <location>
        <position position="280"/>
    </location>
    <ligand>
        <name>Zn(2+)</name>
        <dbReference type="ChEBI" id="CHEBI:29105"/>
        <label>4</label>
    </ligand>
</feature>
<feature type="binding site" evidence="3">
    <location>
        <position position="283"/>
    </location>
    <ligand>
        <name>Zn(2+)</name>
        <dbReference type="ChEBI" id="CHEBI:29105"/>
        <label>4</label>
    </ligand>
</feature>
<feature type="binding site" evidence="3">
    <location>
        <position position="288"/>
    </location>
    <ligand>
        <name>Zn(2+)</name>
        <dbReference type="ChEBI" id="CHEBI:29105"/>
        <label>4</label>
    </ligand>
</feature>
<feature type="binding site" evidence="3">
    <location>
        <position position="293"/>
    </location>
    <ligand>
        <name>Zn(2+)</name>
        <dbReference type="ChEBI" id="CHEBI:29105"/>
        <label>4</label>
    </ligand>
</feature>
<feature type="binding site" evidence="3">
    <location>
        <position position="320"/>
    </location>
    <ligand>
        <name>Zn(2+)</name>
        <dbReference type="ChEBI" id="CHEBI:29105"/>
        <label>5</label>
    </ligand>
</feature>
<feature type="binding site" evidence="3">
    <location>
        <position position="323"/>
    </location>
    <ligand>
        <name>Zn(2+)</name>
        <dbReference type="ChEBI" id="CHEBI:29105"/>
        <label>5</label>
    </ligand>
</feature>
<feature type="binding site" evidence="3">
    <location>
        <position position="338"/>
    </location>
    <ligand>
        <name>Zn(2+)</name>
        <dbReference type="ChEBI" id="CHEBI:29105"/>
        <label>5</label>
    </ligand>
</feature>
<feature type="binding site" evidence="3">
    <location>
        <position position="343"/>
    </location>
    <ligand>
        <name>Zn(2+)</name>
        <dbReference type="ChEBI" id="CHEBI:29105"/>
        <label>5</label>
    </ligand>
</feature>
<feature type="binding site" evidence="3">
    <location>
        <position position="348"/>
    </location>
    <ligand>
        <name>Zn(2+)</name>
        <dbReference type="ChEBI" id="CHEBI:29105"/>
        <label>6</label>
    </ligand>
</feature>
<feature type="binding site" evidence="3">
    <location>
        <position position="351"/>
    </location>
    <ligand>
        <name>Zn(2+)</name>
        <dbReference type="ChEBI" id="CHEBI:29105"/>
        <label>6</label>
    </ligand>
</feature>
<feature type="binding site" evidence="3">
    <location>
        <position position="358"/>
    </location>
    <ligand>
        <name>Zn(2+)</name>
        <dbReference type="ChEBI" id="CHEBI:29105"/>
        <label>6</label>
    </ligand>
</feature>
<feature type="binding site" evidence="3">
    <location>
        <position position="365"/>
    </location>
    <ligand>
        <name>Zn(2+)</name>
        <dbReference type="ChEBI" id="CHEBI:29105"/>
        <label>6</label>
    </ligand>
</feature>
<accession>Q6NW85</accession>
<proteinExistence type="evidence at transcript level"/>